<protein>
    <recommendedName>
        <fullName>Nodal homolog 3-A</fullName>
    </recommendedName>
    <alternativeName>
        <fullName>Nodal-related protein 3-A</fullName>
    </alternativeName>
    <alternativeName>
        <fullName>Xnr3</fullName>
    </alternativeName>
    <alternativeName>
        <fullName>Xnr3-A</fullName>
    </alternativeName>
</protein>
<proteinExistence type="evidence at protein level"/>
<keyword id="KW-0165">Cleavage on pair of basic residues</keyword>
<keyword id="KW-0217">Developmental protein</keyword>
<keyword id="KW-1015">Disulfide bond</keyword>
<keyword id="KW-0306">Gastrulation</keyword>
<keyword id="KW-0325">Glycoprotein</keyword>
<keyword id="KW-0339">Growth factor</keyword>
<keyword id="KW-1185">Reference proteome</keyword>
<keyword id="KW-0964">Secreted</keyword>
<keyword id="KW-0732">Signal</keyword>
<feature type="signal peptide" evidence="4">
    <location>
        <begin position="1"/>
        <end position="18"/>
    </location>
</feature>
<feature type="propeptide" id="PRO_0000338450" evidence="4">
    <location>
        <begin position="19"/>
        <end position="274"/>
    </location>
</feature>
<feature type="chain" id="PRO_0000338451" description="Nodal homolog 3-A" evidence="4">
    <location>
        <begin position="275"/>
        <end position="401"/>
    </location>
</feature>
<feature type="glycosylation site" description="N-linked (GlcNAc...) asparagine" evidence="4">
    <location>
        <position position="168"/>
    </location>
</feature>
<feature type="glycosylation site" description="N-linked (GlcNAc...) asparagine" evidence="4">
    <location>
        <position position="337"/>
    </location>
</feature>
<feature type="glycosylation site" description="N-linked (GlcNAc...) asparagine" evidence="4">
    <location>
        <position position="341"/>
    </location>
</feature>
<feature type="glycosylation site" description="N-linked (GlcNAc...) asparagine" evidence="4">
    <location>
        <position position="344"/>
    </location>
</feature>
<feature type="disulfide bond" evidence="2">
    <location>
        <begin position="299"/>
        <end position="365"/>
    </location>
</feature>
<feature type="disulfide bond" evidence="2">
    <location>
        <begin position="328"/>
        <end position="396"/>
    </location>
</feature>
<feature type="mutagenesis site" description="Retains neural-inducing activity." evidence="5">
    <original>RLRR</original>
    <variation>KLSS</variation>
    <location>
        <begin position="271"/>
        <end position="274"/>
    </location>
</feature>
<feature type="mutagenesis site" description="Retains neural-inducing activity but at reduced potency." evidence="11">
    <original>C</original>
    <variation>S</variation>
    <location>
        <position position="299"/>
    </location>
</feature>
<feature type="mutagenesis site" description="Retains neural-inducing activity but at reduced potency." evidence="11">
    <original>C</original>
    <variation>S</variation>
    <location>
        <position position="328"/>
    </location>
</feature>
<feature type="mutagenesis site" description="Retains neural-inducing activity." evidence="5">
    <original>S</original>
    <variation>G</variation>
    <location>
        <position position="330"/>
    </location>
</feature>
<feature type="mutagenesis site" description="Retains neural-inducing activity but at reduced potency." evidence="11">
    <original>C</original>
    <variation>S</variation>
    <location>
        <position position="365"/>
    </location>
</feature>
<feature type="mutagenesis site" description="Retains neural-inducing activity." evidence="11">
    <original>FKDM</original>
    <variation>CA</variation>
    <location>
        <begin position="398"/>
        <end position="401"/>
    </location>
</feature>
<dbReference type="EMBL" id="U25993">
    <property type="protein sequence ID" value="AAA82755.1"/>
    <property type="molecule type" value="mRNA"/>
</dbReference>
<dbReference type="RefSeq" id="NP_001079259.1">
    <property type="nucleotide sequence ID" value="NM_001085790.1"/>
</dbReference>
<dbReference type="GlyCosmos" id="Q91609">
    <property type="glycosylation" value="4 sites, No reported glycans"/>
</dbReference>
<dbReference type="GeneID" id="378537"/>
<dbReference type="KEGG" id="xla:378537"/>
<dbReference type="AGR" id="Xenbase:XB-GENE-5964411"/>
<dbReference type="CTD" id="378537"/>
<dbReference type="Xenbase" id="XB-GENE-5964411">
    <property type="gene designation" value="nodal3.L"/>
</dbReference>
<dbReference type="OrthoDB" id="5949851at2759"/>
<dbReference type="Proteomes" id="UP000186698">
    <property type="component" value="Chromosome 3L"/>
</dbReference>
<dbReference type="Bgee" id="378537">
    <property type="expression patterns" value="Expressed in gastrula and 1 other cell type or tissue"/>
</dbReference>
<dbReference type="GO" id="GO:0005615">
    <property type="term" value="C:extracellular space"/>
    <property type="evidence" value="ECO:0000318"/>
    <property type="project" value="GO_Central"/>
</dbReference>
<dbReference type="GO" id="GO:0005125">
    <property type="term" value="F:cytokine activity"/>
    <property type="evidence" value="ECO:0000318"/>
    <property type="project" value="GO_Central"/>
</dbReference>
<dbReference type="GO" id="GO:0008083">
    <property type="term" value="F:growth factor activity"/>
    <property type="evidence" value="ECO:0007669"/>
    <property type="project" value="UniProtKB-KW"/>
</dbReference>
<dbReference type="GO" id="GO:0007369">
    <property type="term" value="P:gastrulation"/>
    <property type="evidence" value="ECO:0007669"/>
    <property type="project" value="UniProtKB-KW"/>
</dbReference>
<dbReference type="FunFam" id="2.10.90.10:FF:000026">
    <property type="entry name" value="Nodal homolog 3-A"/>
    <property type="match status" value="1"/>
</dbReference>
<dbReference type="Gene3D" id="2.10.90.10">
    <property type="entry name" value="Cystine-knot cytokines"/>
    <property type="match status" value="1"/>
</dbReference>
<dbReference type="InterPro" id="IPR029034">
    <property type="entry name" value="Cystine-knot_cytokine"/>
</dbReference>
<dbReference type="InterPro" id="IPR001839">
    <property type="entry name" value="TGF-b_C"/>
</dbReference>
<dbReference type="InterPro" id="IPR001111">
    <property type="entry name" value="TGF-b_propeptide"/>
</dbReference>
<dbReference type="InterPro" id="IPR015615">
    <property type="entry name" value="TGF-beta-rel"/>
</dbReference>
<dbReference type="PANTHER" id="PTHR11848:SF295">
    <property type="entry name" value="NODAL HOMOLOG 3-C"/>
    <property type="match status" value="1"/>
</dbReference>
<dbReference type="PANTHER" id="PTHR11848">
    <property type="entry name" value="TGF-BETA FAMILY"/>
    <property type="match status" value="1"/>
</dbReference>
<dbReference type="Pfam" id="PF00019">
    <property type="entry name" value="TGF_beta"/>
    <property type="match status" value="1"/>
</dbReference>
<dbReference type="Pfam" id="PF00688">
    <property type="entry name" value="TGFb_propeptide"/>
    <property type="match status" value="1"/>
</dbReference>
<dbReference type="SMART" id="SM00204">
    <property type="entry name" value="TGFB"/>
    <property type="match status" value="1"/>
</dbReference>
<dbReference type="SUPFAM" id="SSF57501">
    <property type="entry name" value="Cystine-knot cytokines"/>
    <property type="match status" value="1"/>
</dbReference>
<dbReference type="PROSITE" id="PS51362">
    <property type="entry name" value="TGF_BETA_2"/>
    <property type="match status" value="1"/>
</dbReference>
<organism>
    <name type="scientific">Xenopus laevis</name>
    <name type="common">African clawed frog</name>
    <dbReference type="NCBI Taxonomy" id="8355"/>
    <lineage>
        <taxon>Eukaryota</taxon>
        <taxon>Metazoa</taxon>
        <taxon>Chordata</taxon>
        <taxon>Craniata</taxon>
        <taxon>Vertebrata</taxon>
        <taxon>Euteleostomi</taxon>
        <taxon>Amphibia</taxon>
        <taxon>Batrachia</taxon>
        <taxon>Anura</taxon>
        <taxon>Pipoidea</taxon>
        <taxon>Pipidae</taxon>
        <taxon>Xenopodinae</taxon>
        <taxon>Xenopus</taxon>
        <taxon>Xenopus</taxon>
    </lineage>
</organism>
<sequence length="401" mass="46301">MAFLNLFFCLVFISPLMAMPPVLQGRKSISPDSILKDTSTDIGAREFQGRKFPNFMMQLYQNIIRGRDNDLSNLEHPTLQESDTVQSFIAKSYTTVGNRWTLFFDMSSISRSNELKLAELRICLPSFRKSHSVTVDIYHTNDGKEKLFMGSFKTKLSSALDSDCKVFNLTILLQNFLTRGKRLIKDEYIQAKGLHLKDLEKSATEKDTENVDTMKQHQYHVSDFAAERIMLVVFAKEQSHAKPDPPSLGQKLFPSKYGIDDNANKVNGFRRLRRNKKEKTQIHVSTVPPKPIEEIKPECKKVDMFVDFQKIGWGSWIIYPKAYNAYRCESTCAVPQNETENATNHSYIKSLLPLSDMERKECPSCVPMKMMSMSMLYYENEDFILRHHEEMIVEECGFKDM</sequence>
<reference evidence="14 15" key="1">
    <citation type="journal article" date="1995" name="Cell">
        <title>A nodal-related gene defines a physical and functional domain within the Spemann organizer.</title>
        <authorList>
            <person name="Smith W.C."/>
            <person name="McKendry R."/>
            <person name="Ribisi S. Jr."/>
            <person name="Harland R.M."/>
        </authorList>
    </citation>
    <scope>NUCLEOTIDE SEQUENCE [MRNA]</scope>
    <scope>FUNCTION</scope>
    <scope>TISSUE SPECIFICITY</scope>
    <scope>DEVELOPMENTAL STAGE</scope>
    <scope>INDUCTION</scope>
    <source>
        <tissue evidence="9">Gastrula</tissue>
    </source>
</reference>
<reference evidence="14" key="2">
    <citation type="journal article" date="1996" name="Mech. Dev.">
        <title>Combinatorial signalling by Xwnt-11 and Xnr3 in the organizer epithelium.</title>
        <authorList>
            <person name="Glinka A."/>
            <person name="Delius H."/>
            <person name="Blumenstock C."/>
            <person name="Niehrs C."/>
        </authorList>
    </citation>
    <scope>FUNCTION</scope>
    <scope>TISSUE SPECIFICITY</scope>
</reference>
<reference evidence="14" key="3">
    <citation type="journal article" date="1997" name="Development">
        <title>Direct neural induction and selective inhibition of mesoderm and epidermis inducers by Xnr3.</title>
        <authorList>
            <person name="Hansen C.S."/>
            <person name="Marion C.D."/>
            <person name="Steele K."/>
            <person name="George S."/>
            <person name="Smith W.C."/>
        </authorList>
    </citation>
    <scope>FUNCTION</scope>
    <scope>MUTAGENESIS OF CYS-299; CYS-328; CYS-365 AND 398-PHE--MET-401</scope>
</reference>
<reference evidence="14" key="4">
    <citation type="journal article" date="1997" name="Dev. Biol.">
        <title>LEF-1/TCF proteins mediate wnt-inducible transcription from the Xenopus nodal-related 3 promoter.</title>
        <authorList>
            <person name="McKendry R."/>
            <person name="Hsu S.-C."/>
            <person name="Harland R.M."/>
            <person name="Grosschedl R."/>
        </authorList>
    </citation>
    <scope>INDUCTION</scope>
</reference>
<reference evidence="14" key="5">
    <citation type="journal article" date="1997" name="Proc. Natl. Acad. Sci. U.S.A.">
        <title>Siamois is required for formation of Spemann's organizer.</title>
        <authorList>
            <person name="Kessler D.S."/>
        </authorList>
    </citation>
    <scope>INDUCTION</scope>
</reference>
<reference evidence="14" key="6">
    <citation type="journal article" date="2000" name="J. Biol. Chem.">
        <title>Primary structure requirements for Xenopus nodal-related 3 and a comparison with regions required by Xenopus nodal-related 2.</title>
        <authorList>
            <person name="Ezal C.H."/>
            <person name="Marion C.D."/>
            <person name="Smith W.C."/>
        </authorList>
    </citation>
    <scope>FUNCTION</scope>
    <scope>DOMAIN</scope>
    <scope>MUTAGENESIS OF 271-ARG--ARG-274 AND SER-330</scope>
</reference>
<reference evidence="14" key="7">
    <citation type="journal article" date="2002" name="Int. J. Dev. Biol.">
        <title>Multiple interactions between maternally-activated signalling pathways control Xenopus nodal-related genes.</title>
        <authorList>
            <person name="Rex M."/>
            <person name="Hilton E."/>
            <person name="Old R.W."/>
        </authorList>
    </citation>
    <scope>INDUCTION</scope>
</reference>
<reference evidence="14" key="8">
    <citation type="journal article" date="2003" name="Development">
        <title>A novel role for a nodal-related protein; Xnr3 regulates convergent extension movements via the FGF receptor.</title>
        <authorList>
            <person name="Yokota C."/>
            <person name="Kofron M."/>
            <person name="Zuck M."/>
            <person name="Houston D.W."/>
            <person name="Isaacs H."/>
            <person name="Asashima M."/>
            <person name="Wylie C.C."/>
            <person name="Heasman J."/>
        </authorList>
    </citation>
    <scope>FUNCTION</scope>
</reference>
<reference evidence="14" key="9">
    <citation type="journal article" date="2004" name="Dev. Biol.">
        <title>Xenopus tropicalis nodal-related gene 3 regulates BMP signaling: an essential role for the pro-region.</title>
        <authorList>
            <person name="Haramoto Y."/>
            <person name="Tanegashima K."/>
            <person name="Onuma Y."/>
            <person name="Takahashi S."/>
            <person name="Sekizaki H."/>
            <person name="Asashima M."/>
        </authorList>
    </citation>
    <scope>FUNCTION</scope>
    <scope>INTERACTION WITH BMP4</scope>
</reference>
<comment type="function">
    <text evidence="5 7 8 9 10 11">Exhibits mesoderm-dorsalizing activity and neural-inducing activity, but lacks mesoderm-inducing activity. Regulates the expression of specific mesodermal and neural genes. Induces convergent extension movements at the embryonic midline by activating the fgf signaling pathway to induce t/bra expression in the organizer region. Acts with wnt11 to induce Spemann organizer cells and induce axis formation. The unprocessed protein antagonizes bmp-signaling.</text>
</comment>
<comment type="subunit">
    <text evidence="1 8">Monomer (By similarity). The propeptide region interacts with bmp4 in a non-covalent manner.</text>
</comment>
<comment type="subcellular location">
    <subcellularLocation>
        <location evidence="3">Secreted</location>
    </subcellularLocation>
</comment>
<comment type="tissue specificity">
    <text evidence="9 10">Expressed in the epithelial layer of the Spemann organizer during gastrulation.</text>
</comment>
<comment type="developmental stage">
    <text evidence="9">Expression increases from late blastula (stage 9) through gastrulation, ending by the time of blastopore closure (stage 13).</text>
</comment>
<comment type="induction">
    <text evidence="6 9 12 13">By Li(+), siamois and wnt signaling, including wnt8 and lef1. Induction by wnt8 is inhibited by vegt. Not induced by vegt or activin.</text>
</comment>
<comment type="domain">
    <text evidence="1 5">The propeptide region is both necessary and sufficient for bmp-inhibitory activity (By similarity). The propeptide region and the N- and C-terminal thirds of the mature protein are necessary for neural induction activity. Although cleavage doesn't appear essential for activity, residues surrounding the cleavage site are necessary for activity.</text>
</comment>
<comment type="similarity">
    <text evidence="4">Belongs to the TGF-beta family.</text>
</comment>
<gene>
    <name type="primary">nodal3-a</name>
    <name evidence="15" type="synonym">nr3</name>
</gene>
<evidence type="ECO:0000250" key="1"/>
<evidence type="ECO:0000250" key="2">
    <source>
        <dbReference type="UniProtKB" id="P43021"/>
    </source>
</evidence>
<evidence type="ECO:0000250" key="3">
    <source>
        <dbReference type="UniProtKB" id="Q91620"/>
    </source>
</evidence>
<evidence type="ECO:0000255" key="4"/>
<evidence type="ECO:0000269" key="5">
    <source>
    </source>
</evidence>
<evidence type="ECO:0000269" key="6">
    <source>
    </source>
</evidence>
<evidence type="ECO:0000269" key="7">
    <source>
    </source>
</evidence>
<evidence type="ECO:0000269" key="8">
    <source>
    </source>
</evidence>
<evidence type="ECO:0000269" key="9">
    <source>
    </source>
</evidence>
<evidence type="ECO:0000269" key="10">
    <source>
    </source>
</evidence>
<evidence type="ECO:0000269" key="11">
    <source>
    </source>
</evidence>
<evidence type="ECO:0000269" key="12">
    <source>
    </source>
</evidence>
<evidence type="ECO:0000269" key="13">
    <source>
    </source>
</evidence>
<evidence type="ECO:0000305" key="14"/>
<evidence type="ECO:0000312" key="15">
    <source>
        <dbReference type="EMBL" id="AAA82755.1"/>
    </source>
</evidence>
<accession>Q91609</accession>
<name>NOD3A_XENLA</name>